<reference key="1">
    <citation type="journal article" date="1999" name="Biochem. J.">
        <title>Solution structure of a defensin-like peptide from platypus venom.</title>
        <authorList>
            <person name="Torres A.M."/>
            <person name="Wang X."/>
            <person name="Fletcher J.I."/>
            <person name="Alewood D."/>
            <person name="Alewood P.F."/>
            <person name="Smith R."/>
            <person name="Simpson R.J."/>
            <person name="Nicholson G.M."/>
            <person name="Sutherland S.K."/>
            <person name="Gallagher C.H."/>
            <person name="King G.F."/>
            <person name="Kuchel P.W."/>
        </authorList>
    </citation>
    <scope>PROTEIN SEQUENCE</scope>
    <scope>FUNCTION</scope>
    <scope>SUBCELLULAR LOCATION</scope>
    <scope>TISSUE SPECIFICITY</scope>
    <source>
        <tissue>Venom</tissue>
        <tissue>Venom gland</tissue>
    </source>
</reference>
<organism>
    <name type="scientific">Ornithorhynchus anatinus</name>
    <name type="common">Duckbill platypus</name>
    <dbReference type="NCBI Taxonomy" id="9258"/>
    <lineage>
        <taxon>Eukaryota</taxon>
        <taxon>Metazoa</taxon>
        <taxon>Chordata</taxon>
        <taxon>Craniata</taxon>
        <taxon>Vertebrata</taxon>
        <taxon>Euteleostomi</taxon>
        <taxon>Mammalia</taxon>
        <taxon>Monotremata</taxon>
        <taxon>Ornithorhynchidae</taxon>
        <taxon>Ornithorhynchus</taxon>
    </lineage>
</organism>
<keyword id="KW-0903">Direct protein sequencing</keyword>
<keyword id="KW-1015">Disulfide bond</keyword>
<keyword id="KW-1185">Reference proteome</keyword>
<keyword id="KW-0964">Secreted</keyword>
<keyword id="KW-0800">Toxin</keyword>
<protein>
    <recommendedName>
        <fullName evidence="3">Defensin-like peptide 3</fullName>
        <shortName evidence="3">DLP-3</shortName>
    </recommendedName>
</protein>
<comment type="function">
    <text evidence="2">Does not show antimicrobial, myotoxic, hemolytic and cell-promoting activities.</text>
</comment>
<comment type="subcellular location">
    <subcellularLocation>
        <location evidence="2">Secreted</location>
    </subcellularLocation>
</comment>
<comment type="tissue specificity">
    <text evidence="2">Produced by the crural gland and detected in venom from the spur located on each male hind leg.</text>
</comment>
<comment type="online information" name="Protein Spotlight">
    <link uri="https://www.proteinspotlight.org/back_issues/029"/>
    <text>Platypus poison - Issue 29 of December 2002</text>
</comment>
<name>DLP3_ORNAN</name>
<evidence type="ECO:0000250" key="1">
    <source>
        <dbReference type="UniProtKB" id="P82140"/>
    </source>
</evidence>
<evidence type="ECO:0000269" key="2">
    <source>
    </source>
</evidence>
<evidence type="ECO:0000303" key="3">
    <source>
    </source>
</evidence>
<proteinExistence type="evidence at protein level"/>
<sequence length="38" mass="4721">FEMQYCWSHSGVCRDKSERNNKPMAWTYCENRQKKCEF</sequence>
<accession>P82141</accession>
<dbReference type="SMR" id="P82141"/>
<dbReference type="InParanoid" id="P82141"/>
<dbReference type="Proteomes" id="UP000002279">
    <property type="component" value="Unplaced"/>
</dbReference>
<dbReference type="GO" id="GO:0005576">
    <property type="term" value="C:extracellular region"/>
    <property type="evidence" value="ECO:0000314"/>
    <property type="project" value="UniProtKB"/>
</dbReference>
<dbReference type="GO" id="GO:0090729">
    <property type="term" value="F:toxin activity"/>
    <property type="evidence" value="ECO:0007669"/>
    <property type="project" value="UniProtKB-KW"/>
</dbReference>
<dbReference type="Gene3D" id="2.20.20.10">
    <property type="entry name" value="Anthopleurin-A"/>
    <property type="match status" value="1"/>
</dbReference>
<dbReference type="InterPro" id="IPR012553">
    <property type="entry name" value="Defensin_3"/>
</dbReference>
<dbReference type="InterPro" id="IPR023355">
    <property type="entry name" value="Myo_ane_neurotoxin_sf"/>
</dbReference>
<dbReference type="Pfam" id="PF08131">
    <property type="entry name" value="Defensin_3"/>
    <property type="match status" value="1"/>
</dbReference>
<dbReference type="SUPFAM" id="SSF57392">
    <property type="entry name" value="Defensin-like"/>
    <property type="match status" value="1"/>
</dbReference>
<feature type="peptide" id="PRO_0000044773" description="Defensin-like peptide 3" evidence="2">
    <location>
        <begin position="1"/>
        <end position="38"/>
    </location>
</feature>
<feature type="disulfide bond" evidence="1">
    <location>
        <begin position="6"/>
        <end position="36"/>
    </location>
</feature>
<feature type="disulfide bond" evidence="1">
    <location>
        <begin position="13"/>
        <end position="29"/>
    </location>
</feature>